<keyword id="KW-0002">3D-structure</keyword>
<keyword id="KW-0489">Methyltransferase</keyword>
<keyword id="KW-1185">Reference proteome</keyword>
<keyword id="KW-0698">rRNA processing</keyword>
<keyword id="KW-0949">S-adenosyl-L-methionine</keyword>
<keyword id="KW-0808">Transferase</keyword>
<proteinExistence type="evidence at protein level"/>
<name>RSMD_ECOLI</name>
<feature type="chain" id="PRO_0000169548" description="Ribosomal RNA small subunit methyltransferase D">
    <location>
        <begin position="1"/>
        <end position="198"/>
    </location>
</feature>
<feature type="strand" evidence="4">
    <location>
        <begin position="11"/>
        <end position="13"/>
    </location>
</feature>
<feature type="helix" evidence="4">
    <location>
        <begin position="17"/>
        <end position="19"/>
    </location>
</feature>
<feature type="strand" evidence="4">
    <location>
        <begin position="23"/>
        <end position="25"/>
    </location>
</feature>
<feature type="helix" evidence="4">
    <location>
        <begin position="37"/>
        <end position="51"/>
    </location>
</feature>
<feature type="strand" evidence="4">
    <location>
        <begin position="55"/>
        <end position="58"/>
    </location>
</feature>
<feature type="helix" evidence="4">
    <location>
        <begin position="65"/>
        <end position="72"/>
    </location>
</feature>
<feature type="strand" evidence="4">
    <location>
        <begin position="76"/>
        <end position="81"/>
    </location>
</feature>
<feature type="helix" evidence="4">
    <location>
        <begin position="85"/>
        <end position="97"/>
    </location>
</feature>
<feature type="strand" evidence="4">
    <location>
        <begin position="102"/>
        <end position="106"/>
    </location>
</feature>
<feature type="helix" evidence="4">
    <location>
        <begin position="110"/>
        <end position="114"/>
    </location>
</feature>
<feature type="strand" evidence="4">
    <location>
        <begin position="121"/>
        <end position="126"/>
    </location>
</feature>
<feature type="strand" evidence="4">
    <location>
        <begin position="129"/>
        <end position="131"/>
    </location>
</feature>
<feature type="turn" evidence="4">
    <location>
        <begin position="132"/>
        <end position="134"/>
    </location>
</feature>
<feature type="helix" evidence="4">
    <location>
        <begin position="135"/>
        <end position="144"/>
    </location>
</feature>
<feature type="strand" evidence="4">
    <location>
        <begin position="148"/>
        <end position="159"/>
    </location>
</feature>
<feature type="helix" evidence="4">
    <location>
        <begin position="160"/>
        <end position="162"/>
    </location>
</feature>
<feature type="strand" evidence="4">
    <location>
        <begin position="171"/>
        <end position="179"/>
    </location>
</feature>
<feature type="strand" evidence="4">
    <location>
        <begin position="182"/>
        <end position="189"/>
    </location>
</feature>
<sequence>MKKPNHSGSGQIRIIGGQWRGRKLPVPDSPGLRPTTDRVRETLFNWLAPVIVDAQCLDCFAGSGALGLEALSRYAAGATLIEMDRAVSQQLIKNLATLKAGNARVVNSNAMSFLAQKGTPHNIVFVDPPFRRGLLEETINLLEDNGWLADEALIYVESEVENGLPTVPANWSLHREKVAGQVAYRLYQREAQGESDAD</sequence>
<evidence type="ECO:0000269" key="1">
    <source>
    </source>
</evidence>
<evidence type="ECO:0000303" key="2">
    <source>
    </source>
</evidence>
<evidence type="ECO:0000305" key="3"/>
<evidence type="ECO:0007829" key="4">
    <source>
        <dbReference type="PDB" id="2FPO"/>
    </source>
</evidence>
<comment type="function">
    <text evidence="1">Specifically methylates the guanine in position 966 of 16S rRNA in the assembled 30S particle.</text>
</comment>
<comment type="catalytic activity">
    <reaction evidence="1">
        <text>guanosine(966) in 16S rRNA + S-adenosyl-L-methionine = N(2)-methylguanosine(966) in 16S rRNA + S-adenosyl-L-homocysteine + H(+)</text>
        <dbReference type="Rhea" id="RHEA:23548"/>
        <dbReference type="Rhea" id="RHEA-COMP:10211"/>
        <dbReference type="Rhea" id="RHEA-COMP:10212"/>
        <dbReference type="ChEBI" id="CHEBI:15378"/>
        <dbReference type="ChEBI" id="CHEBI:57856"/>
        <dbReference type="ChEBI" id="CHEBI:59789"/>
        <dbReference type="ChEBI" id="CHEBI:74269"/>
        <dbReference type="ChEBI" id="CHEBI:74481"/>
        <dbReference type="EC" id="2.1.1.171"/>
    </reaction>
</comment>
<comment type="interaction">
    <interactant intactId="EBI-561207">
        <id>P0ADX9</id>
    </interactant>
    <interactant intactId="EBI-542092">
        <id>P0A6Y8</id>
        <label>dnaK</label>
    </interactant>
    <organismsDiffer>false</organismsDiffer>
    <experiments>2</experiments>
</comment>
<comment type="interaction">
    <interactant intactId="EBI-561207">
        <id>P0ADX9</id>
    </interactant>
    <interactant intactId="EBI-301077">
        <id>P0CE47</id>
        <label>tufA</label>
    </interactant>
    <organismsDiffer>false</organismsDiffer>
    <experiments>2</experiments>
</comment>
<comment type="similarity">
    <text evidence="3">Belongs to the methyltransferase superfamily. RsmD family.</text>
</comment>
<protein>
    <recommendedName>
        <fullName>Ribosomal RNA small subunit methyltransferase D</fullName>
        <ecNumber evidence="1">2.1.1.171</ecNumber>
    </recommendedName>
    <alternativeName>
        <fullName evidence="2">16S rRNA m2G966 methyltransferase</fullName>
    </alternativeName>
    <alternativeName>
        <fullName>rRNA (guanine-N(2)-)-methyltransferase</fullName>
    </alternativeName>
</protein>
<gene>
    <name type="primary">rsmD</name>
    <name type="synonym">yhhF</name>
    <name type="ordered locus">b3465</name>
    <name type="ordered locus">JW3430</name>
</gene>
<accession>P0ADX9</accession>
<accession>P10120</accession>
<accession>Q2M7C8</accession>
<organism>
    <name type="scientific">Escherichia coli (strain K12)</name>
    <dbReference type="NCBI Taxonomy" id="83333"/>
    <lineage>
        <taxon>Bacteria</taxon>
        <taxon>Pseudomonadati</taxon>
        <taxon>Pseudomonadota</taxon>
        <taxon>Gammaproteobacteria</taxon>
        <taxon>Enterobacterales</taxon>
        <taxon>Enterobacteriaceae</taxon>
        <taxon>Escherichia</taxon>
    </lineage>
</organism>
<reference key="1">
    <citation type="journal article" date="1986" name="Mol. Gen. Genet.">
        <title>A new cell division operon in Escherichia coli.</title>
        <authorList>
            <person name="Gill D.R."/>
            <person name="Hatfull G.F."/>
            <person name="Salmond G.P.C."/>
        </authorList>
    </citation>
    <scope>NUCLEOTIDE SEQUENCE [GENOMIC DNA]</scope>
    <source>
        <strain>K12</strain>
    </source>
</reference>
<reference key="2">
    <citation type="journal article" date="1994" name="Nucleic Acids Res.">
        <title>Analysis of the Escherichia coli genome. V. DNA sequence of the region from 76.0 to 81.5 minutes.</title>
        <authorList>
            <person name="Sofia H.J."/>
            <person name="Burland V."/>
            <person name="Daniels D.L."/>
            <person name="Plunkett G. III"/>
            <person name="Blattner F.R."/>
        </authorList>
    </citation>
    <scope>NUCLEOTIDE SEQUENCE [LARGE SCALE GENOMIC DNA]</scope>
    <source>
        <strain>K12 / MG1655 / ATCC 47076</strain>
    </source>
</reference>
<reference key="3">
    <citation type="journal article" date="1997" name="Science">
        <title>The complete genome sequence of Escherichia coli K-12.</title>
        <authorList>
            <person name="Blattner F.R."/>
            <person name="Plunkett G. III"/>
            <person name="Bloch C.A."/>
            <person name="Perna N.T."/>
            <person name="Burland V."/>
            <person name="Riley M."/>
            <person name="Collado-Vides J."/>
            <person name="Glasner J.D."/>
            <person name="Rode C.K."/>
            <person name="Mayhew G.F."/>
            <person name="Gregor J."/>
            <person name="Davis N.W."/>
            <person name="Kirkpatrick H.A."/>
            <person name="Goeden M.A."/>
            <person name="Rose D.J."/>
            <person name="Mau B."/>
            <person name="Shao Y."/>
        </authorList>
    </citation>
    <scope>NUCLEOTIDE SEQUENCE [LARGE SCALE GENOMIC DNA]</scope>
    <source>
        <strain>K12 / MG1655 / ATCC 47076</strain>
    </source>
</reference>
<reference key="4">
    <citation type="journal article" date="2006" name="Mol. Syst. Biol.">
        <title>Highly accurate genome sequences of Escherichia coli K-12 strains MG1655 and W3110.</title>
        <authorList>
            <person name="Hayashi K."/>
            <person name="Morooka N."/>
            <person name="Yamamoto Y."/>
            <person name="Fujita K."/>
            <person name="Isono K."/>
            <person name="Choi S."/>
            <person name="Ohtsubo E."/>
            <person name="Baba T."/>
            <person name="Wanner B.L."/>
            <person name="Mori H."/>
            <person name="Horiuchi T."/>
        </authorList>
    </citation>
    <scope>NUCLEOTIDE SEQUENCE [LARGE SCALE GENOMIC DNA]</scope>
    <source>
        <strain>K12 / W3110 / ATCC 27325 / DSM 5911</strain>
    </source>
</reference>
<reference key="5">
    <citation type="journal article" date="1997" name="Electrophoresis">
        <title>Escherichia coli proteome analysis using the gene-protein database.</title>
        <authorList>
            <person name="VanBogelen R.A."/>
            <person name="Abshire K.Z."/>
            <person name="Moldover B."/>
            <person name="Olson E.R."/>
            <person name="Neidhardt F.C."/>
        </authorList>
    </citation>
    <scope>IDENTIFICATION BY 2D-GEL</scope>
</reference>
<reference key="6">
    <citation type="journal article" date="2007" name="J. Biol. Chem.">
        <title>Methyltransferase that modifies guanine 966 of the 16 S rRNA: functional identification and tertiary structure.</title>
        <authorList>
            <person name="Lesnyak D.V."/>
            <person name="Osipiuk J."/>
            <person name="Skarina T."/>
            <person name="Sergiev P.V."/>
            <person name="Bogdanov A.A."/>
            <person name="Edwards A."/>
            <person name="Savchenko A."/>
            <person name="Joachimiak A."/>
            <person name="Dontsova O.A."/>
        </authorList>
    </citation>
    <scope>X-RAY CRYSTALLOGRAPHY (2.05 ANGSTROMS)</scope>
    <scope>FUNCTION</scope>
    <scope>CATALYTIC ACTIVITY</scope>
</reference>
<dbReference type="EC" id="2.1.1.171" evidence="1"/>
<dbReference type="EMBL" id="X04398">
    <property type="protein sequence ID" value="CAA27983.1"/>
    <property type="molecule type" value="Genomic_DNA"/>
</dbReference>
<dbReference type="EMBL" id="U00039">
    <property type="protein sequence ID" value="AAB18440.1"/>
    <property type="molecule type" value="Genomic_DNA"/>
</dbReference>
<dbReference type="EMBL" id="U00096">
    <property type="protein sequence ID" value="AAC76490.1"/>
    <property type="molecule type" value="Genomic_DNA"/>
</dbReference>
<dbReference type="EMBL" id="AP009048">
    <property type="protein sequence ID" value="BAE77828.1"/>
    <property type="molecule type" value="Genomic_DNA"/>
</dbReference>
<dbReference type="PIR" id="S03129">
    <property type="entry name" value="QQECX3"/>
</dbReference>
<dbReference type="RefSeq" id="NP_417922.1">
    <property type="nucleotide sequence ID" value="NC_000913.3"/>
</dbReference>
<dbReference type="RefSeq" id="WP_000743193.1">
    <property type="nucleotide sequence ID" value="NZ_STEB01000004.1"/>
</dbReference>
<dbReference type="PDB" id="2FPO">
    <property type="method" value="X-ray"/>
    <property type="resolution" value="2.05 A"/>
    <property type="chains" value="A/B/C/D/E/F=1-198"/>
</dbReference>
<dbReference type="PDBsum" id="2FPO"/>
<dbReference type="SMR" id="P0ADX9"/>
<dbReference type="BioGRID" id="4262500">
    <property type="interactions" value="66"/>
</dbReference>
<dbReference type="DIP" id="DIP-48275N"/>
<dbReference type="FunCoup" id="P0ADX9">
    <property type="interactions" value="459"/>
</dbReference>
<dbReference type="IntAct" id="P0ADX9">
    <property type="interactions" value="6"/>
</dbReference>
<dbReference type="STRING" id="511145.b3465"/>
<dbReference type="jPOST" id="P0ADX9"/>
<dbReference type="PaxDb" id="511145-b3465"/>
<dbReference type="EnsemblBacteria" id="AAC76490">
    <property type="protein sequence ID" value="AAC76490"/>
    <property type="gene ID" value="b3465"/>
</dbReference>
<dbReference type="GeneID" id="93778526"/>
<dbReference type="GeneID" id="947977"/>
<dbReference type="KEGG" id="ecj:JW3430"/>
<dbReference type="KEGG" id="eco:b3465"/>
<dbReference type="KEGG" id="ecoc:C3026_18770"/>
<dbReference type="PATRIC" id="fig|511145.12.peg.3564"/>
<dbReference type="EchoBASE" id="EB0339"/>
<dbReference type="eggNOG" id="COG0742">
    <property type="taxonomic scope" value="Bacteria"/>
</dbReference>
<dbReference type="HOGENOM" id="CLU_075826_2_2_6"/>
<dbReference type="InParanoid" id="P0ADX9"/>
<dbReference type="OMA" id="FNWLMPY"/>
<dbReference type="OrthoDB" id="9803017at2"/>
<dbReference type="PhylomeDB" id="P0ADX9"/>
<dbReference type="BioCyc" id="EcoCyc:EG10343-MONOMER"/>
<dbReference type="BioCyc" id="MetaCyc:EG10343-MONOMER"/>
<dbReference type="BRENDA" id="2.1.1.171">
    <property type="organism ID" value="2026"/>
</dbReference>
<dbReference type="EvolutionaryTrace" id="P0ADX9"/>
<dbReference type="PRO" id="PR:P0ADX9"/>
<dbReference type="Proteomes" id="UP000000625">
    <property type="component" value="Chromosome"/>
</dbReference>
<dbReference type="GO" id="GO:0052913">
    <property type="term" value="F:16S rRNA (guanine(966)-N(2))-methyltransferase activity"/>
    <property type="evidence" value="ECO:0000314"/>
    <property type="project" value="EcoCyc"/>
</dbReference>
<dbReference type="GO" id="GO:0003676">
    <property type="term" value="F:nucleic acid binding"/>
    <property type="evidence" value="ECO:0007669"/>
    <property type="project" value="InterPro"/>
</dbReference>
<dbReference type="GO" id="GO:0070475">
    <property type="term" value="P:rRNA base methylation"/>
    <property type="evidence" value="ECO:0000315"/>
    <property type="project" value="EcoCyc"/>
</dbReference>
<dbReference type="CDD" id="cd02440">
    <property type="entry name" value="AdoMet_MTases"/>
    <property type="match status" value="1"/>
</dbReference>
<dbReference type="FunFam" id="3.40.50.150:FF:000082">
    <property type="entry name" value="Ribosomal RNA small subunit methyltransferase D"/>
    <property type="match status" value="1"/>
</dbReference>
<dbReference type="Gene3D" id="3.40.50.150">
    <property type="entry name" value="Vaccinia Virus protein VP39"/>
    <property type="match status" value="1"/>
</dbReference>
<dbReference type="InterPro" id="IPR002052">
    <property type="entry name" value="DNA_methylase_N6_adenine_CS"/>
</dbReference>
<dbReference type="InterPro" id="IPR004398">
    <property type="entry name" value="RNA_MeTrfase_RsmD"/>
</dbReference>
<dbReference type="InterPro" id="IPR029063">
    <property type="entry name" value="SAM-dependent_MTases_sf"/>
</dbReference>
<dbReference type="NCBIfam" id="TIGR00095">
    <property type="entry name" value="16S rRNA (guanine(966)-N(2))-methyltransferase RsmD"/>
    <property type="match status" value="1"/>
</dbReference>
<dbReference type="NCBIfam" id="NF008157">
    <property type="entry name" value="PRK10909.1"/>
    <property type="match status" value="1"/>
</dbReference>
<dbReference type="PANTHER" id="PTHR43542">
    <property type="entry name" value="METHYLTRANSFERASE"/>
    <property type="match status" value="1"/>
</dbReference>
<dbReference type="PANTHER" id="PTHR43542:SF1">
    <property type="entry name" value="METHYLTRANSFERASE"/>
    <property type="match status" value="1"/>
</dbReference>
<dbReference type="Pfam" id="PF03602">
    <property type="entry name" value="Cons_hypoth95"/>
    <property type="match status" value="1"/>
</dbReference>
<dbReference type="PIRSF" id="PIRSF004553">
    <property type="entry name" value="CHP00095"/>
    <property type="match status" value="1"/>
</dbReference>
<dbReference type="SUPFAM" id="SSF53335">
    <property type="entry name" value="S-adenosyl-L-methionine-dependent methyltransferases"/>
    <property type="match status" value="1"/>
</dbReference>
<dbReference type="PROSITE" id="PS00092">
    <property type="entry name" value="N6_MTASE"/>
    <property type="match status" value="1"/>
</dbReference>